<evidence type="ECO:0000250" key="1"/>
<evidence type="ECO:0000255" key="2"/>
<evidence type="ECO:0000255" key="3">
    <source>
        <dbReference type="PROSITE-ProRule" id="PRU01266"/>
    </source>
</evidence>
<evidence type="ECO:0000305" key="4"/>
<gene>
    <name type="ordered locus">MJ0634</name>
</gene>
<dbReference type="EMBL" id="L77117">
    <property type="protein sequence ID" value="AAB98629.1"/>
    <property type="molecule type" value="Genomic_DNA"/>
</dbReference>
<dbReference type="PIR" id="B64379">
    <property type="entry name" value="B64379"/>
</dbReference>
<dbReference type="RefSeq" id="WP_010870139.1">
    <property type="nucleotide sequence ID" value="NC_000909.1"/>
</dbReference>
<dbReference type="SMR" id="Q58051"/>
<dbReference type="FunCoup" id="Q58051">
    <property type="interactions" value="2"/>
</dbReference>
<dbReference type="STRING" id="243232.MJ_0634"/>
<dbReference type="PaxDb" id="243232-MJ_0634"/>
<dbReference type="EnsemblBacteria" id="AAB98629">
    <property type="protein sequence ID" value="AAB98629"/>
    <property type="gene ID" value="MJ_0634"/>
</dbReference>
<dbReference type="GeneID" id="1451500"/>
<dbReference type="KEGG" id="mja:MJ_0634"/>
<dbReference type="eggNOG" id="arCOG03246">
    <property type="taxonomic scope" value="Archaea"/>
</dbReference>
<dbReference type="HOGENOM" id="CLU_440512_0_0_2"/>
<dbReference type="InParanoid" id="Q58051"/>
<dbReference type="OrthoDB" id="21308at2157"/>
<dbReference type="PhylomeDB" id="Q58051"/>
<dbReference type="Proteomes" id="UP000000805">
    <property type="component" value="Chromosome"/>
</dbReference>
<dbReference type="GO" id="GO:0051539">
    <property type="term" value="F:4 iron, 4 sulfur cluster binding"/>
    <property type="evidence" value="ECO:0007669"/>
    <property type="project" value="UniProtKB-KW"/>
</dbReference>
<dbReference type="GO" id="GO:0003824">
    <property type="term" value="F:catalytic activity"/>
    <property type="evidence" value="ECO:0007669"/>
    <property type="project" value="InterPro"/>
</dbReference>
<dbReference type="GO" id="GO:0046872">
    <property type="term" value="F:metal ion binding"/>
    <property type="evidence" value="ECO:0007669"/>
    <property type="project" value="UniProtKB-KW"/>
</dbReference>
<dbReference type="Gene3D" id="6.10.140.1170">
    <property type="match status" value="1"/>
</dbReference>
<dbReference type="Gene3D" id="3.20.20.70">
    <property type="entry name" value="Aldolase class I"/>
    <property type="match status" value="1"/>
</dbReference>
<dbReference type="InterPro" id="IPR013785">
    <property type="entry name" value="Aldolase_TIM"/>
</dbReference>
<dbReference type="InterPro" id="IPR003739">
    <property type="entry name" value="Lys_aminomutase/Glu_NH3_mut"/>
</dbReference>
<dbReference type="InterPro" id="IPR007197">
    <property type="entry name" value="rSAM"/>
</dbReference>
<dbReference type="NCBIfam" id="TIGR00238">
    <property type="entry name" value="KamA family radical SAM protein"/>
    <property type="match status" value="1"/>
</dbReference>
<dbReference type="PANTHER" id="PTHR30538:SF0">
    <property type="entry name" value="L-LYSINE 2,3-AMINOMUTASE AQ_1632-RELATED"/>
    <property type="match status" value="1"/>
</dbReference>
<dbReference type="PANTHER" id="PTHR30538">
    <property type="entry name" value="LYSINE 2,3-AMINOMUTASE-RELATED"/>
    <property type="match status" value="1"/>
</dbReference>
<dbReference type="Pfam" id="PF04055">
    <property type="entry name" value="Radical_SAM"/>
    <property type="match status" value="1"/>
</dbReference>
<dbReference type="SFLD" id="SFLDG01070">
    <property type="entry name" value="PLP-dependent"/>
    <property type="match status" value="1"/>
</dbReference>
<dbReference type="SFLD" id="SFLDS00029">
    <property type="entry name" value="Radical_SAM"/>
    <property type="match status" value="1"/>
</dbReference>
<dbReference type="SUPFAM" id="SSF102114">
    <property type="entry name" value="Radical SAM enzymes"/>
    <property type="match status" value="1"/>
</dbReference>
<dbReference type="PROSITE" id="PS51918">
    <property type="entry name" value="RADICAL_SAM"/>
    <property type="match status" value="1"/>
</dbReference>
<reference key="1">
    <citation type="journal article" date="1996" name="Science">
        <title>Complete genome sequence of the methanogenic archaeon, Methanococcus jannaschii.</title>
        <authorList>
            <person name="Bult C.J."/>
            <person name="White O."/>
            <person name="Olsen G.J."/>
            <person name="Zhou L."/>
            <person name="Fleischmann R.D."/>
            <person name="Sutton G.G."/>
            <person name="Blake J.A."/>
            <person name="FitzGerald L.M."/>
            <person name="Clayton R.A."/>
            <person name="Gocayne J.D."/>
            <person name="Kerlavage A.R."/>
            <person name="Dougherty B.A."/>
            <person name="Tomb J.-F."/>
            <person name="Adams M.D."/>
            <person name="Reich C.I."/>
            <person name="Overbeek R."/>
            <person name="Kirkness E.F."/>
            <person name="Weinstock K.G."/>
            <person name="Merrick J.M."/>
            <person name="Glodek A."/>
            <person name="Scott J.L."/>
            <person name="Geoghagen N.S.M."/>
            <person name="Weidman J.F."/>
            <person name="Fuhrmann J.L."/>
            <person name="Nguyen D."/>
            <person name="Utterback T.R."/>
            <person name="Kelley J.M."/>
            <person name="Peterson J.D."/>
            <person name="Sadow P.W."/>
            <person name="Hanna M.C."/>
            <person name="Cotton M.D."/>
            <person name="Roberts K.M."/>
            <person name="Hurst M.A."/>
            <person name="Kaine B.P."/>
            <person name="Borodovsky M."/>
            <person name="Klenk H.-P."/>
            <person name="Fraser C.M."/>
            <person name="Smith H.O."/>
            <person name="Woese C.R."/>
            <person name="Venter J.C."/>
        </authorList>
    </citation>
    <scope>NUCLEOTIDE SEQUENCE [LARGE SCALE GENOMIC DNA]</scope>
    <source>
        <strain>ATCC 43067 / DSM 2661 / JAL-1 / JCM 10045 / NBRC 100440</strain>
    </source>
</reference>
<accession>Q58051</accession>
<proteinExistence type="inferred from homology"/>
<feature type="chain" id="PRO_0000172295" description="Uncharacterized KamA family protein MJ0634">
    <location>
        <begin position="1"/>
        <end position="620"/>
    </location>
</feature>
<feature type="domain" description="Radical SAM core" evidence="3">
    <location>
        <begin position="324"/>
        <end position="586"/>
    </location>
</feature>
<feature type="binding site" evidence="2">
    <location>
        <position position="338"/>
    </location>
    <ligand>
        <name>[4Fe-4S] cluster</name>
        <dbReference type="ChEBI" id="CHEBI:49883"/>
        <note>4Fe-4S-S-AdoMet</note>
    </ligand>
</feature>
<feature type="binding site" evidence="2">
    <location>
        <position position="342"/>
    </location>
    <ligand>
        <name>[4Fe-4S] cluster</name>
        <dbReference type="ChEBI" id="CHEBI:49883"/>
        <note>4Fe-4S-S-AdoMet</note>
    </ligand>
</feature>
<feature type="binding site" evidence="2">
    <location>
        <position position="345"/>
    </location>
    <ligand>
        <name>[4Fe-4S] cluster</name>
        <dbReference type="ChEBI" id="CHEBI:49883"/>
        <note>4Fe-4S-S-AdoMet</note>
    </ligand>
</feature>
<feature type="modified residue" description="N6-(pyridoxal phosphate)lysine" evidence="1">
    <location>
        <position position="552"/>
    </location>
</feature>
<keyword id="KW-0004">4Fe-4S</keyword>
<keyword id="KW-0408">Iron</keyword>
<keyword id="KW-0411">Iron-sulfur</keyword>
<keyword id="KW-0479">Metal-binding</keyword>
<keyword id="KW-0663">Pyridoxal phosphate</keyword>
<keyword id="KW-1185">Reference proteome</keyword>
<keyword id="KW-0949">S-adenosyl-L-methionine</keyword>
<sequence>MTIKSMTEYETISYKTFLDIFSPLPEIGEILEESESVEEAREKLFEFCKELEWEIRMGRIKFDNEVDRWLALKAIEVFLNIISKDNERLAGFSTLEYLWKAYKGDEEALKEIREGFIEEFRHLFLAMSGKADYSLGFLGKRLLEEGVKFIDFSKIKGREAGIARSNFLDKVYEIMREYISRYPSGLDKRIILKRKKNREILEEFFGITDEEWFNYKWQFKNVLRGLKGVKILRELREVTNFKISDEDLEIIEKAVKNGIPFGLTPYYLHLFDFENPYVEDLAVRRQVIPPEWYVEKMIEHKEDRNIAFDFMGEHDTSPIDLVTRRYVTIAIIKPYESCPQICVYCQRNWMVQDFDAKAFPGWEKVEKALDWFAEHDSMIEILITGGDPFSLSDKAIEKMLNRIAEMNHVVGVRFGTRTIVTAPMRITDELAELLGSFEKSLMISTHVESCYEITPEVAEAVKKLRTNNIYIYNQHVFHRYVSRRFENVALRIALKKVGIIPYYTFYPKGKMEHKDYLVPIARLAQEVKEEARLLPGSFRTDEPIFNVPRMGKNHLRAWQDRELIAIKPNGSRVYLMHPWEKGIYPTKLYTYEDVPIKEYLDSLKEIGENIEEYKTIWYYY</sequence>
<comment type="cofactor">
    <cofactor evidence="1">
        <name>[4Fe-4S] cluster</name>
        <dbReference type="ChEBI" id="CHEBI:49883"/>
    </cofactor>
    <text evidence="1">Binds 1 [4Fe-4S] cluster. The cluster is coordinated with 3 cysteines and an exchangeable S-adenosyl-L-methionine.</text>
</comment>
<comment type="cofactor">
    <cofactor evidence="1">
        <name>pyridoxal 5'-phosphate</name>
        <dbReference type="ChEBI" id="CHEBI:597326"/>
    </cofactor>
</comment>
<comment type="similarity">
    <text evidence="4">Belongs to the radical SAM superfamily. KamA family.</text>
</comment>
<protein>
    <recommendedName>
        <fullName>Uncharacterized KamA family protein MJ0634</fullName>
    </recommendedName>
</protein>
<organism>
    <name type="scientific">Methanocaldococcus jannaschii (strain ATCC 43067 / DSM 2661 / JAL-1 / JCM 10045 / NBRC 100440)</name>
    <name type="common">Methanococcus jannaschii</name>
    <dbReference type="NCBI Taxonomy" id="243232"/>
    <lineage>
        <taxon>Archaea</taxon>
        <taxon>Methanobacteriati</taxon>
        <taxon>Methanobacteriota</taxon>
        <taxon>Methanomada group</taxon>
        <taxon>Methanococci</taxon>
        <taxon>Methanococcales</taxon>
        <taxon>Methanocaldococcaceae</taxon>
        <taxon>Methanocaldococcus</taxon>
    </lineage>
</organism>
<name>Y634_METJA</name>